<accession>Q7W4N4</accession>
<gene>
    <name evidence="1" type="primary">purM</name>
    <name type="ordered locus">BPP3625</name>
</gene>
<proteinExistence type="inferred from homology"/>
<dbReference type="EC" id="6.3.3.1" evidence="1"/>
<dbReference type="EMBL" id="BX640434">
    <property type="protein sequence ID" value="CAE38909.1"/>
    <property type="molecule type" value="Genomic_DNA"/>
</dbReference>
<dbReference type="RefSeq" id="WP_010929162.1">
    <property type="nucleotide sequence ID" value="NC_002928.3"/>
</dbReference>
<dbReference type="SMR" id="Q7W4N4"/>
<dbReference type="GeneID" id="93205413"/>
<dbReference type="KEGG" id="bpa:BPP3625"/>
<dbReference type="HOGENOM" id="CLU_047116_0_0_4"/>
<dbReference type="UniPathway" id="UPA00074">
    <property type="reaction ID" value="UER00129"/>
</dbReference>
<dbReference type="Proteomes" id="UP000001421">
    <property type="component" value="Chromosome"/>
</dbReference>
<dbReference type="GO" id="GO:0005829">
    <property type="term" value="C:cytosol"/>
    <property type="evidence" value="ECO:0007669"/>
    <property type="project" value="TreeGrafter"/>
</dbReference>
<dbReference type="GO" id="GO:0005524">
    <property type="term" value="F:ATP binding"/>
    <property type="evidence" value="ECO:0007669"/>
    <property type="project" value="UniProtKB-KW"/>
</dbReference>
<dbReference type="GO" id="GO:0004637">
    <property type="term" value="F:phosphoribosylamine-glycine ligase activity"/>
    <property type="evidence" value="ECO:0007669"/>
    <property type="project" value="TreeGrafter"/>
</dbReference>
<dbReference type="GO" id="GO:0004641">
    <property type="term" value="F:phosphoribosylformylglycinamidine cyclo-ligase activity"/>
    <property type="evidence" value="ECO:0007669"/>
    <property type="project" value="UniProtKB-UniRule"/>
</dbReference>
<dbReference type="GO" id="GO:0006189">
    <property type="term" value="P:'de novo' IMP biosynthetic process"/>
    <property type="evidence" value="ECO:0007669"/>
    <property type="project" value="UniProtKB-UniRule"/>
</dbReference>
<dbReference type="GO" id="GO:0046084">
    <property type="term" value="P:adenine biosynthetic process"/>
    <property type="evidence" value="ECO:0007669"/>
    <property type="project" value="TreeGrafter"/>
</dbReference>
<dbReference type="CDD" id="cd02196">
    <property type="entry name" value="PurM"/>
    <property type="match status" value="1"/>
</dbReference>
<dbReference type="FunFam" id="3.30.1330.10:FF:000001">
    <property type="entry name" value="Phosphoribosylformylglycinamidine cyclo-ligase"/>
    <property type="match status" value="1"/>
</dbReference>
<dbReference type="FunFam" id="3.90.650.10:FF:000001">
    <property type="entry name" value="Phosphoribosylformylglycinamidine cyclo-ligase"/>
    <property type="match status" value="1"/>
</dbReference>
<dbReference type="Gene3D" id="3.90.650.10">
    <property type="entry name" value="PurM-like C-terminal domain"/>
    <property type="match status" value="1"/>
</dbReference>
<dbReference type="Gene3D" id="3.30.1330.10">
    <property type="entry name" value="PurM-like, N-terminal domain"/>
    <property type="match status" value="1"/>
</dbReference>
<dbReference type="HAMAP" id="MF_00741">
    <property type="entry name" value="AIRS"/>
    <property type="match status" value="1"/>
</dbReference>
<dbReference type="InterPro" id="IPR010918">
    <property type="entry name" value="PurM-like_C_dom"/>
</dbReference>
<dbReference type="InterPro" id="IPR036676">
    <property type="entry name" value="PurM-like_C_sf"/>
</dbReference>
<dbReference type="InterPro" id="IPR016188">
    <property type="entry name" value="PurM-like_N"/>
</dbReference>
<dbReference type="InterPro" id="IPR036921">
    <property type="entry name" value="PurM-like_N_sf"/>
</dbReference>
<dbReference type="InterPro" id="IPR004733">
    <property type="entry name" value="PurM_cligase"/>
</dbReference>
<dbReference type="NCBIfam" id="TIGR00878">
    <property type="entry name" value="purM"/>
    <property type="match status" value="1"/>
</dbReference>
<dbReference type="PANTHER" id="PTHR10520:SF12">
    <property type="entry name" value="TRIFUNCTIONAL PURINE BIOSYNTHETIC PROTEIN ADENOSINE-3"/>
    <property type="match status" value="1"/>
</dbReference>
<dbReference type="PANTHER" id="PTHR10520">
    <property type="entry name" value="TRIFUNCTIONAL PURINE BIOSYNTHETIC PROTEIN ADENOSINE-3-RELATED"/>
    <property type="match status" value="1"/>
</dbReference>
<dbReference type="Pfam" id="PF00586">
    <property type="entry name" value="AIRS"/>
    <property type="match status" value="1"/>
</dbReference>
<dbReference type="Pfam" id="PF02769">
    <property type="entry name" value="AIRS_C"/>
    <property type="match status" value="1"/>
</dbReference>
<dbReference type="SUPFAM" id="SSF56042">
    <property type="entry name" value="PurM C-terminal domain-like"/>
    <property type="match status" value="1"/>
</dbReference>
<dbReference type="SUPFAM" id="SSF55326">
    <property type="entry name" value="PurM N-terminal domain-like"/>
    <property type="match status" value="1"/>
</dbReference>
<keyword id="KW-0067">ATP-binding</keyword>
<keyword id="KW-0963">Cytoplasm</keyword>
<keyword id="KW-0436">Ligase</keyword>
<keyword id="KW-0547">Nucleotide-binding</keyword>
<keyword id="KW-0658">Purine biosynthesis</keyword>
<name>PUR5_BORPA</name>
<reference key="1">
    <citation type="journal article" date="2003" name="Nat. Genet.">
        <title>Comparative analysis of the genome sequences of Bordetella pertussis, Bordetella parapertussis and Bordetella bronchiseptica.</title>
        <authorList>
            <person name="Parkhill J."/>
            <person name="Sebaihia M."/>
            <person name="Preston A."/>
            <person name="Murphy L.D."/>
            <person name="Thomson N.R."/>
            <person name="Harris D.E."/>
            <person name="Holden M.T.G."/>
            <person name="Churcher C.M."/>
            <person name="Bentley S.D."/>
            <person name="Mungall K.L."/>
            <person name="Cerdeno-Tarraga A.-M."/>
            <person name="Temple L."/>
            <person name="James K.D."/>
            <person name="Harris B."/>
            <person name="Quail M.A."/>
            <person name="Achtman M."/>
            <person name="Atkin R."/>
            <person name="Baker S."/>
            <person name="Basham D."/>
            <person name="Bason N."/>
            <person name="Cherevach I."/>
            <person name="Chillingworth T."/>
            <person name="Collins M."/>
            <person name="Cronin A."/>
            <person name="Davis P."/>
            <person name="Doggett J."/>
            <person name="Feltwell T."/>
            <person name="Goble A."/>
            <person name="Hamlin N."/>
            <person name="Hauser H."/>
            <person name="Holroyd S."/>
            <person name="Jagels K."/>
            <person name="Leather S."/>
            <person name="Moule S."/>
            <person name="Norberczak H."/>
            <person name="O'Neil S."/>
            <person name="Ormond D."/>
            <person name="Price C."/>
            <person name="Rabbinowitsch E."/>
            <person name="Rutter S."/>
            <person name="Sanders M."/>
            <person name="Saunders D."/>
            <person name="Seeger K."/>
            <person name="Sharp S."/>
            <person name="Simmonds M."/>
            <person name="Skelton J."/>
            <person name="Squares R."/>
            <person name="Squares S."/>
            <person name="Stevens K."/>
            <person name="Unwin L."/>
            <person name="Whitehead S."/>
            <person name="Barrell B.G."/>
            <person name="Maskell D.J."/>
        </authorList>
    </citation>
    <scope>NUCLEOTIDE SEQUENCE [LARGE SCALE GENOMIC DNA]</scope>
    <source>
        <strain>12822 / ATCC BAA-587 / NCTC 13253</strain>
    </source>
</reference>
<feature type="chain" id="PRO_0000148200" description="Phosphoribosylformylglycinamidine cyclo-ligase">
    <location>
        <begin position="1"/>
        <end position="349"/>
    </location>
</feature>
<comment type="catalytic activity">
    <reaction evidence="1">
        <text>2-formamido-N(1)-(5-O-phospho-beta-D-ribosyl)acetamidine + ATP = 5-amino-1-(5-phospho-beta-D-ribosyl)imidazole + ADP + phosphate + H(+)</text>
        <dbReference type="Rhea" id="RHEA:23032"/>
        <dbReference type="ChEBI" id="CHEBI:15378"/>
        <dbReference type="ChEBI" id="CHEBI:30616"/>
        <dbReference type="ChEBI" id="CHEBI:43474"/>
        <dbReference type="ChEBI" id="CHEBI:137981"/>
        <dbReference type="ChEBI" id="CHEBI:147287"/>
        <dbReference type="ChEBI" id="CHEBI:456216"/>
        <dbReference type="EC" id="6.3.3.1"/>
    </reaction>
</comment>
<comment type="pathway">
    <text evidence="1">Purine metabolism; IMP biosynthesis via de novo pathway; 5-amino-1-(5-phospho-D-ribosyl)imidazole from N(2)-formyl-N(1)-(5-phospho-D-ribosyl)glycinamide: step 2/2.</text>
</comment>
<comment type="subcellular location">
    <subcellularLocation>
        <location evidence="1">Cytoplasm</location>
    </subcellularLocation>
</comment>
<comment type="similarity">
    <text evidence="1">Belongs to the AIR synthase family.</text>
</comment>
<organism>
    <name type="scientific">Bordetella parapertussis (strain 12822 / ATCC BAA-587 / NCTC 13253)</name>
    <dbReference type="NCBI Taxonomy" id="257311"/>
    <lineage>
        <taxon>Bacteria</taxon>
        <taxon>Pseudomonadati</taxon>
        <taxon>Pseudomonadota</taxon>
        <taxon>Betaproteobacteria</taxon>
        <taxon>Burkholderiales</taxon>
        <taxon>Alcaligenaceae</taxon>
        <taxon>Bordetella</taxon>
    </lineage>
</organism>
<protein>
    <recommendedName>
        <fullName evidence="1">Phosphoribosylformylglycinamidine cyclo-ligase</fullName>
        <ecNumber evidence="1">6.3.3.1</ecNumber>
    </recommendedName>
    <alternativeName>
        <fullName evidence="1">AIR synthase</fullName>
    </alternativeName>
    <alternativeName>
        <fullName evidence="1">AIRS</fullName>
    </alternativeName>
    <alternativeName>
        <fullName evidence="1">Phosphoribosyl-aminoimidazole synthetase</fullName>
    </alternativeName>
</protein>
<sequence length="349" mass="36818">MTNQHSAPLTYRDAGVDIDAGDALVDRIKPLAARTMRPGVLVGIGGFGALFEVPKKFREPVLVSGTDGVGTKLRLAFDWNRHDTVGIDLVAMSVNDILVQGAEPLYFLDYFACGKLSVDTAAAVVGGIARGCELAGCALIGGETAEMPGMYPDGEYDLAGFAVGAVDKSAIIDGKSIQPGDVVLGLASSGAHSNGYSLVRKILERAGARPDQDFHGQPLVDVVMAPTRIYVKQVLAALDRHGPAIKGLAHITGGGLLDNVPRILQPGMAAQLQRDGWEMPKLFQWLQQQGSVADAEMHRVFNCGIGMVLVVAADQADAVAATLREQGEIVNRIGEIVPQQDGMAQTVVV</sequence>
<evidence type="ECO:0000255" key="1">
    <source>
        <dbReference type="HAMAP-Rule" id="MF_00741"/>
    </source>
</evidence>